<comment type="cofactor">
    <cofactor evidence="2">
        <name>[2Fe-2S] cluster</name>
        <dbReference type="ChEBI" id="CHEBI:190135"/>
    </cofactor>
    <text evidence="2">Binds 1 [2Fe-2S] cluster.</text>
</comment>
<dbReference type="EMBL" id="BA000003">
    <property type="protein sequence ID" value="BAB12894.1"/>
    <property type="molecule type" value="Genomic_DNA"/>
</dbReference>
<dbReference type="RefSeq" id="NP_240008.1">
    <property type="nucleotide sequence ID" value="NC_002528.1"/>
</dbReference>
<dbReference type="SMR" id="P57274"/>
<dbReference type="STRING" id="563178.BUAP5A_174"/>
<dbReference type="EnsemblBacteria" id="BAB12894">
    <property type="protein sequence ID" value="BAB12894"/>
    <property type="gene ID" value="BAB12894"/>
</dbReference>
<dbReference type="KEGG" id="buc:BU177"/>
<dbReference type="PATRIC" id="fig|107806.10.peg.188"/>
<dbReference type="eggNOG" id="COG0633">
    <property type="taxonomic scope" value="Bacteria"/>
</dbReference>
<dbReference type="HOGENOM" id="CLU_082632_6_3_6"/>
<dbReference type="BioCyc" id="BAPH107806:GBZJ-175-MONOMER"/>
<dbReference type="Proteomes" id="UP000001806">
    <property type="component" value="Chromosome"/>
</dbReference>
<dbReference type="GO" id="GO:0051537">
    <property type="term" value="F:2 iron, 2 sulfur cluster binding"/>
    <property type="evidence" value="ECO:0007669"/>
    <property type="project" value="UniProtKB-KW"/>
</dbReference>
<dbReference type="GO" id="GO:0046872">
    <property type="term" value="F:metal ion binding"/>
    <property type="evidence" value="ECO:0007669"/>
    <property type="project" value="UniProtKB-KW"/>
</dbReference>
<dbReference type="CDD" id="cd00207">
    <property type="entry name" value="fer2"/>
    <property type="match status" value="1"/>
</dbReference>
<dbReference type="Gene3D" id="3.10.20.30">
    <property type="match status" value="1"/>
</dbReference>
<dbReference type="InterPro" id="IPR036010">
    <property type="entry name" value="2Fe-2S_ferredoxin-like_sf"/>
</dbReference>
<dbReference type="InterPro" id="IPR001041">
    <property type="entry name" value="2Fe-2S_ferredoxin-type"/>
</dbReference>
<dbReference type="InterPro" id="IPR006058">
    <property type="entry name" value="2Fe2S_fd_BS"/>
</dbReference>
<dbReference type="InterPro" id="IPR012675">
    <property type="entry name" value="Beta-grasp_dom_sf"/>
</dbReference>
<dbReference type="NCBIfam" id="NF007985">
    <property type="entry name" value="PRK10713.1"/>
    <property type="match status" value="1"/>
</dbReference>
<dbReference type="Pfam" id="PF00111">
    <property type="entry name" value="Fer2"/>
    <property type="match status" value="1"/>
</dbReference>
<dbReference type="SUPFAM" id="SSF54292">
    <property type="entry name" value="2Fe-2S ferredoxin-like"/>
    <property type="match status" value="1"/>
</dbReference>
<dbReference type="PROSITE" id="PS00197">
    <property type="entry name" value="2FE2S_FER_1"/>
    <property type="match status" value="1"/>
</dbReference>
<evidence type="ECO:0000250" key="1"/>
<evidence type="ECO:0000305" key="2"/>
<feature type="chain" id="PRO_0000189419" description="Uncharacterized ferredoxin-like protein BU177">
    <location>
        <begin position="1"/>
        <end position="87"/>
    </location>
</feature>
<feature type="domain" description="2Fe-2S ferredoxin-type">
    <location>
        <begin position="4"/>
        <end position="87"/>
    </location>
</feature>
<feature type="binding site" evidence="1">
    <location>
        <position position="38"/>
    </location>
    <ligand>
        <name>[2Fe-2S] cluster</name>
        <dbReference type="ChEBI" id="CHEBI:190135"/>
    </ligand>
</feature>
<feature type="binding site" evidence="1">
    <location>
        <position position="43"/>
    </location>
    <ligand>
        <name>[2Fe-2S] cluster</name>
        <dbReference type="ChEBI" id="CHEBI:190135"/>
    </ligand>
</feature>
<feature type="binding site" evidence="1">
    <location>
        <position position="46"/>
    </location>
    <ligand>
        <name>[2Fe-2S] cluster</name>
        <dbReference type="ChEBI" id="CHEBI:190135"/>
    </ligand>
</feature>
<feature type="binding site" evidence="1">
    <location>
        <position position="75"/>
    </location>
    <ligand>
        <name>[2Fe-2S] cluster</name>
        <dbReference type="ChEBI" id="CHEBI:190135"/>
    </ligand>
</feature>
<proteinExistence type="predicted"/>
<reference key="1">
    <citation type="journal article" date="2000" name="Nature">
        <title>Genome sequence of the endocellular bacterial symbiont of aphids Buchnera sp. APS.</title>
        <authorList>
            <person name="Shigenobu S."/>
            <person name="Watanabe H."/>
            <person name="Hattori M."/>
            <person name="Sakaki Y."/>
            <person name="Ishikawa H."/>
        </authorList>
    </citation>
    <scope>NUCLEOTIDE SEQUENCE [LARGE SCALE GENOMIC DNA]</scope>
    <source>
        <strain>APS</strain>
    </source>
</reference>
<accession>P57274</accession>
<protein>
    <recommendedName>
        <fullName>Uncharacterized ferredoxin-like protein BU177</fullName>
    </recommendedName>
</protein>
<name>Y177_BUCAI</name>
<keyword id="KW-0001">2Fe-2S</keyword>
<keyword id="KW-0249">Electron transport</keyword>
<keyword id="KW-0408">Iron</keyword>
<keyword id="KW-0411">Iron-sulfur</keyword>
<keyword id="KW-0479">Metal-binding</keyword>
<keyword id="KW-1185">Reference proteome</keyword>
<keyword id="KW-0813">Transport</keyword>
<sequence length="87" mass="10094">MQSSIIEITNIKKKIVYQTQITLLLVLELNNIHLEYQCRSGYCGICRIELIKGEVFYLIKQPMAALFKEREIFPCCCKPKGNITIKI</sequence>
<organism>
    <name type="scientific">Buchnera aphidicola subsp. Acyrthosiphon pisum (strain APS)</name>
    <name type="common">Acyrthosiphon pisum symbiotic bacterium</name>
    <dbReference type="NCBI Taxonomy" id="107806"/>
    <lineage>
        <taxon>Bacteria</taxon>
        <taxon>Pseudomonadati</taxon>
        <taxon>Pseudomonadota</taxon>
        <taxon>Gammaproteobacteria</taxon>
        <taxon>Enterobacterales</taxon>
        <taxon>Erwiniaceae</taxon>
        <taxon>Buchnera</taxon>
    </lineage>
</organism>
<gene>
    <name type="ordered locus">BU177</name>
</gene>